<gene>
    <name evidence="1" type="primary">folD</name>
    <name type="ordered locus">BRADO0277</name>
</gene>
<name>FOLD_BRASO</name>
<reference key="1">
    <citation type="journal article" date="2007" name="Science">
        <title>Legumes symbioses: absence of nod genes in photosynthetic bradyrhizobia.</title>
        <authorList>
            <person name="Giraud E."/>
            <person name="Moulin L."/>
            <person name="Vallenet D."/>
            <person name="Barbe V."/>
            <person name="Cytryn E."/>
            <person name="Avarre J.-C."/>
            <person name="Jaubert M."/>
            <person name="Simon D."/>
            <person name="Cartieaux F."/>
            <person name="Prin Y."/>
            <person name="Bena G."/>
            <person name="Hannibal L."/>
            <person name="Fardoux J."/>
            <person name="Kojadinovic M."/>
            <person name="Vuillet L."/>
            <person name="Lajus A."/>
            <person name="Cruveiller S."/>
            <person name="Rouy Z."/>
            <person name="Mangenot S."/>
            <person name="Segurens B."/>
            <person name="Dossat C."/>
            <person name="Franck W.L."/>
            <person name="Chang W.-S."/>
            <person name="Saunders E."/>
            <person name="Bruce D."/>
            <person name="Richardson P."/>
            <person name="Normand P."/>
            <person name="Dreyfus B."/>
            <person name="Pignol D."/>
            <person name="Stacey G."/>
            <person name="Emerich D."/>
            <person name="Vermeglio A."/>
            <person name="Medigue C."/>
            <person name="Sadowsky M."/>
        </authorList>
    </citation>
    <scope>NUCLEOTIDE SEQUENCE [LARGE SCALE GENOMIC DNA]</scope>
    <source>
        <strain>ORS 278</strain>
    </source>
</reference>
<proteinExistence type="inferred from homology"/>
<keyword id="KW-0028">Amino-acid biosynthesis</keyword>
<keyword id="KW-0368">Histidine biosynthesis</keyword>
<keyword id="KW-0378">Hydrolase</keyword>
<keyword id="KW-0486">Methionine biosynthesis</keyword>
<keyword id="KW-0511">Multifunctional enzyme</keyword>
<keyword id="KW-0521">NADP</keyword>
<keyword id="KW-0554">One-carbon metabolism</keyword>
<keyword id="KW-0560">Oxidoreductase</keyword>
<keyword id="KW-0658">Purine biosynthesis</keyword>
<keyword id="KW-1185">Reference proteome</keyword>
<organism>
    <name type="scientific">Bradyrhizobium sp. (strain ORS 278)</name>
    <dbReference type="NCBI Taxonomy" id="114615"/>
    <lineage>
        <taxon>Bacteria</taxon>
        <taxon>Pseudomonadati</taxon>
        <taxon>Pseudomonadota</taxon>
        <taxon>Alphaproteobacteria</taxon>
        <taxon>Hyphomicrobiales</taxon>
        <taxon>Nitrobacteraceae</taxon>
        <taxon>Bradyrhizobium</taxon>
    </lineage>
</organism>
<feature type="chain" id="PRO_0000305799" description="Bifunctional protein FolD">
    <location>
        <begin position="1"/>
        <end position="294"/>
    </location>
</feature>
<feature type="binding site" evidence="1">
    <location>
        <begin position="166"/>
        <end position="168"/>
    </location>
    <ligand>
        <name>NADP(+)</name>
        <dbReference type="ChEBI" id="CHEBI:58349"/>
    </ligand>
</feature>
<feature type="binding site" evidence="1">
    <location>
        <position position="191"/>
    </location>
    <ligand>
        <name>NADP(+)</name>
        <dbReference type="ChEBI" id="CHEBI:58349"/>
    </ligand>
</feature>
<feature type="binding site" evidence="1">
    <location>
        <position position="232"/>
    </location>
    <ligand>
        <name>NADP(+)</name>
        <dbReference type="ChEBI" id="CHEBI:58349"/>
    </ligand>
</feature>
<protein>
    <recommendedName>
        <fullName evidence="1">Bifunctional protein FolD</fullName>
    </recommendedName>
    <domain>
        <recommendedName>
            <fullName evidence="1">Methylenetetrahydrofolate dehydrogenase</fullName>
            <ecNumber evidence="1">1.5.1.5</ecNumber>
        </recommendedName>
    </domain>
    <domain>
        <recommendedName>
            <fullName evidence="1">Methenyltetrahydrofolate cyclohydrolase</fullName>
            <ecNumber evidence="1">3.5.4.9</ecNumber>
        </recommendedName>
    </domain>
</protein>
<dbReference type="EC" id="1.5.1.5" evidence="1"/>
<dbReference type="EC" id="3.5.4.9" evidence="1"/>
<dbReference type="EMBL" id="CU234118">
    <property type="protein sequence ID" value="CAL74235.1"/>
    <property type="molecule type" value="Genomic_DNA"/>
</dbReference>
<dbReference type="RefSeq" id="WP_011923521.1">
    <property type="nucleotide sequence ID" value="NC_009445.1"/>
</dbReference>
<dbReference type="SMR" id="A4YK09"/>
<dbReference type="STRING" id="114615.BRADO0277"/>
<dbReference type="KEGG" id="bra:BRADO0277"/>
<dbReference type="eggNOG" id="COG0190">
    <property type="taxonomic scope" value="Bacteria"/>
</dbReference>
<dbReference type="HOGENOM" id="CLU_034045_2_1_5"/>
<dbReference type="OrthoDB" id="9803580at2"/>
<dbReference type="UniPathway" id="UPA00193"/>
<dbReference type="Proteomes" id="UP000001994">
    <property type="component" value="Chromosome"/>
</dbReference>
<dbReference type="GO" id="GO:0005829">
    <property type="term" value="C:cytosol"/>
    <property type="evidence" value="ECO:0007669"/>
    <property type="project" value="TreeGrafter"/>
</dbReference>
<dbReference type="GO" id="GO:0004477">
    <property type="term" value="F:methenyltetrahydrofolate cyclohydrolase activity"/>
    <property type="evidence" value="ECO:0007669"/>
    <property type="project" value="UniProtKB-UniRule"/>
</dbReference>
<dbReference type="GO" id="GO:0004488">
    <property type="term" value="F:methylenetetrahydrofolate dehydrogenase (NADP+) activity"/>
    <property type="evidence" value="ECO:0007669"/>
    <property type="project" value="UniProtKB-UniRule"/>
</dbReference>
<dbReference type="GO" id="GO:0000105">
    <property type="term" value="P:L-histidine biosynthetic process"/>
    <property type="evidence" value="ECO:0007669"/>
    <property type="project" value="UniProtKB-KW"/>
</dbReference>
<dbReference type="GO" id="GO:0009086">
    <property type="term" value="P:methionine biosynthetic process"/>
    <property type="evidence" value="ECO:0007669"/>
    <property type="project" value="UniProtKB-KW"/>
</dbReference>
<dbReference type="GO" id="GO:0006164">
    <property type="term" value="P:purine nucleotide biosynthetic process"/>
    <property type="evidence" value="ECO:0007669"/>
    <property type="project" value="UniProtKB-KW"/>
</dbReference>
<dbReference type="GO" id="GO:0035999">
    <property type="term" value="P:tetrahydrofolate interconversion"/>
    <property type="evidence" value="ECO:0007669"/>
    <property type="project" value="UniProtKB-UniRule"/>
</dbReference>
<dbReference type="CDD" id="cd01080">
    <property type="entry name" value="NAD_bind_m-THF_DH_Cyclohyd"/>
    <property type="match status" value="1"/>
</dbReference>
<dbReference type="FunFam" id="3.40.50.720:FF:000006">
    <property type="entry name" value="Bifunctional protein FolD"/>
    <property type="match status" value="1"/>
</dbReference>
<dbReference type="FunFam" id="3.40.50.10860:FF:000005">
    <property type="entry name" value="C-1-tetrahydrofolate synthase, cytoplasmic, putative"/>
    <property type="match status" value="1"/>
</dbReference>
<dbReference type="Gene3D" id="3.40.50.10860">
    <property type="entry name" value="Leucine Dehydrogenase, chain A, domain 1"/>
    <property type="match status" value="1"/>
</dbReference>
<dbReference type="Gene3D" id="3.40.50.720">
    <property type="entry name" value="NAD(P)-binding Rossmann-like Domain"/>
    <property type="match status" value="1"/>
</dbReference>
<dbReference type="HAMAP" id="MF_01576">
    <property type="entry name" value="THF_DHG_CYH"/>
    <property type="match status" value="1"/>
</dbReference>
<dbReference type="InterPro" id="IPR046346">
    <property type="entry name" value="Aminoacid_DH-like_N_sf"/>
</dbReference>
<dbReference type="InterPro" id="IPR036291">
    <property type="entry name" value="NAD(P)-bd_dom_sf"/>
</dbReference>
<dbReference type="InterPro" id="IPR000672">
    <property type="entry name" value="THF_DH/CycHdrlase"/>
</dbReference>
<dbReference type="InterPro" id="IPR020630">
    <property type="entry name" value="THF_DH/CycHdrlase_cat_dom"/>
</dbReference>
<dbReference type="InterPro" id="IPR020867">
    <property type="entry name" value="THF_DH/CycHdrlase_CS"/>
</dbReference>
<dbReference type="InterPro" id="IPR020631">
    <property type="entry name" value="THF_DH/CycHdrlase_NAD-bd_dom"/>
</dbReference>
<dbReference type="NCBIfam" id="NF010783">
    <property type="entry name" value="PRK14186.1"/>
    <property type="match status" value="1"/>
</dbReference>
<dbReference type="NCBIfam" id="NF010785">
    <property type="entry name" value="PRK14188.1"/>
    <property type="match status" value="1"/>
</dbReference>
<dbReference type="PANTHER" id="PTHR48099:SF5">
    <property type="entry name" value="C-1-TETRAHYDROFOLATE SYNTHASE, CYTOPLASMIC"/>
    <property type="match status" value="1"/>
</dbReference>
<dbReference type="PANTHER" id="PTHR48099">
    <property type="entry name" value="C-1-TETRAHYDROFOLATE SYNTHASE, CYTOPLASMIC-RELATED"/>
    <property type="match status" value="1"/>
</dbReference>
<dbReference type="Pfam" id="PF00763">
    <property type="entry name" value="THF_DHG_CYH"/>
    <property type="match status" value="1"/>
</dbReference>
<dbReference type="Pfam" id="PF02882">
    <property type="entry name" value="THF_DHG_CYH_C"/>
    <property type="match status" value="1"/>
</dbReference>
<dbReference type="PRINTS" id="PR00085">
    <property type="entry name" value="THFDHDRGNASE"/>
</dbReference>
<dbReference type="SUPFAM" id="SSF53223">
    <property type="entry name" value="Aminoacid dehydrogenase-like, N-terminal domain"/>
    <property type="match status" value="1"/>
</dbReference>
<dbReference type="SUPFAM" id="SSF51735">
    <property type="entry name" value="NAD(P)-binding Rossmann-fold domains"/>
    <property type="match status" value="1"/>
</dbReference>
<dbReference type="PROSITE" id="PS00766">
    <property type="entry name" value="THF_DHG_CYH_1"/>
    <property type="match status" value="1"/>
</dbReference>
<accession>A4YK09</accession>
<sequence length="294" mass="30626">MTARIIDGKIIAADLRAQVAREVERVKHDLGLTPGLAVVLVGNDPASEVYVRSKHTQTQAAGMASFEHKLPADVAQAELLALISKLNQDPSVHGILVQLPLPKGLDTEAVINAIDPAKDVDGLHPHNAGRLAGGQPALAPCTPLGCIILSKTVHASLEGMNAIVIGRSNLVGRPLVQLLLNENATVTIAHSRSRDLPALTARADLVYAAVGRPEMVKRDWIKPGATVIDVGINRIPTPEGKTRLVGDVAYAEVAEVAGAITPVPGGVGQMTVACLLVNTLRAACAIAGLPKPSV</sequence>
<comment type="function">
    <text evidence="1">Catalyzes the oxidation of 5,10-methylenetetrahydrofolate to 5,10-methenyltetrahydrofolate and then the hydrolysis of 5,10-methenyltetrahydrofolate to 10-formyltetrahydrofolate.</text>
</comment>
<comment type="catalytic activity">
    <reaction evidence="1">
        <text>(6R)-5,10-methylene-5,6,7,8-tetrahydrofolate + NADP(+) = (6R)-5,10-methenyltetrahydrofolate + NADPH</text>
        <dbReference type="Rhea" id="RHEA:22812"/>
        <dbReference type="ChEBI" id="CHEBI:15636"/>
        <dbReference type="ChEBI" id="CHEBI:57455"/>
        <dbReference type="ChEBI" id="CHEBI:57783"/>
        <dbReference type="ChEBI" id="CHEBI:58349"/>
        <dbReference type="EC" id="1.5.1.5"/>
    </reaction>
</comment>
<comment type="catalytic activity">
    <reaction evidence="1">
        <text>(6R)-5,10-methenyltetrahydrofolate + H2O = (6R)-10-formyltetrahydrofolate + H(+)</text>
        <dbReference type="Rhea" id="RHEA:23700"/>
        <dbReference type="ChEBI" id="CHEBI:15377"/>
        <dbReference type="ChEBI" id="CHEBI:15378"/>
        <dbReference type="ChEBI" id="CHEBI:57455"/>
        <dbReference type="ChEBI" id="CHEBI:195366"/>
        <dbReference type="EC" id="3.5.4.9"/>
    </reaction>
</comment>
<comment type="pathway">
    <text evidence="1">One-carbon metabolism; tetrahydrofolate interconversion.</text>
</comment>
<comment type="subunit">
    <text evidence="1">Homodimer.</text>
</comment>
<comment type="similarity">
    <text evidence="1">Belongs to the tetrahydrofolate dehydrogenase/cyclohydrolase family.</text>
</comment>
<evidence type="ECO:0000255" key="1">
    <source>
        <dbReference type="HAMAP-Rule" id="MF_01576"/>
    </source>
</evidence>